<dbReference type="EMBL" id="CH479227">
    <property type="protein sequence ID" value="EDW35281.1"/>
    <property type="molecule type" value="Genomic_DNA"/>
</dbReference>
<dbReference type="SMR" id="B4H957"/>
<dbReference type="STRING" id="7234.B4H957"/>
<dbReference type="EnsemblMetazoa" id="FBtr0186541">
    <property type="protein sequence ID" value="FBpp0185033"/>
    <property type="gene ID" value="FBgn0158521"/>
</dbReference>
<dbReference type="EnsemblMetazoa" id="XM_002027350.2">
    <property type="protein sequence ID" value="XP_002027386.1"/>
    <property type="gene ID" value="LOC6602382"/>
</dbReference>
<dbReference type="GeneID" id="6602382"/>
<dbReference type="KEGG" id="dpe:6602382"/>
<dbReference type="eggNOG" id="KOG3420">
    <property type="taxonomic scope" value="Eukaryota"/>
</dbReference>
<dbReference type="HOGENOM" id="CLU_145773_0_0_1"/>
<dbReference type="OMA" id="VMETQHM"/>
<dbReference type="OrthoDB" id="419617at2759"/>
<dbReference type="PhylomeDB" id="B4H957"/>
<dbReference type="Proteomes" id="UP000008744">
    <property type="component" value="Unassembled WGS sequence"/>
</dbReference>
<dbReference type="GO" id="GO:0005654">
    <property type="term" value="C:nucleoplasm"/>
    <property type="evidence" value="ECO:0007669"/>
    <property type="project" value="TreeGrafter"/>
</dbReference>
<dbReference type="GO" id="GO:0070876">
    <property type="term" value="C:SOSS complex"/>
    <property type="evidence" value="ECO:0007669"/>
    <property type="project" value="InterPro"/>
</dbReference>
<dbReference type="GO" id="GO:0006281">
    <property type="term" value="P:DNA repair"/>
    <property type="evidence" value="ECO:0007669"/>
    <property type="project" value="InterPro"/>
</dbReference>
<dbReference type="InterPro" id="IPR031821">
    <property type="entry name" value="SOSSC"/>
</dbReference>
<dbReference type="PANTHER" id="PTHR31526">
    <property type="entry name" value="SOSS COMPLEX SUBUNIT C"/>
    <property type="match status" value="1"/>
</dbReference>
<dbReference type="PANTHER" id="PTHR31526:SF2">
    <property type="entry name" value="SOSS COMPLEX SUBUNIT C"/>
    <property type="match status" value="1"/>
</dbReference>
<dbReference type="Pfam" id="PF15925">
    <property type="entry name" value="SOSSC"/>
    <property type="match status" value="1"/>
</dbReference>
<evidence type="ECO:0000256" key="1">
    <source>
        <dbReference type="SAM" id="MobiDB-lite"/>
    </source>
</evidence>
<evidence type="ECO:0000305" key="2"/>
<name>SOSSC_DROPE</name>
<protein>
    <recommendedName>
        <fullName>SOSS complex subunit C homolog</fullName>
    </recommendedName>
</protein>
<gene>
    <name type="ORF">GL20926</name>
</gene>
<organism>
    <name type="scientific">Drosophila persimilis</name>
    <name type="common">Fruit fly</name>
    <dbReference type="NCBI Taxonomy" id="7234"/>
    <lineage>
        <taxon>Eukaryota</taxon>
        <taxon>Metazoa</taxon>
        <taxon>Ecdysozoa</taxon>
        <taxon>Arthropoda</taxon>
        <taxon>Hexapoda</taxon>
        <taxon>Insecta</taxon>
        <taxon>Pterygota</taxon>
        <taxon>Neoptera</taxon>
        <taxon>Endopterygota</taxon>
        <taxon>Diptera</taxon>
        <taxon>Brachycera</taxon>
        <taxon>Muscomorpha</taxon>
        <taxon>Ephydroidea</taxon>
        <taxon>Drosophilidae</taxon>
        <taxon>Drosophila</taxon>
        <taxon>Sophophora</taxon>
    </lineage>
</organism>
<reference key="1">
    <citation type="journal article" date="2007" name="Nature">
        <title>Evolution of genes and genomes on the Drosophila phylogeny.</title>
        <authorList>
            <consortium name="Drosophila 12 genomes consortium"/>
        </authorList>
    </citation>
    <scope>NUCLEOTIDE SEQUENCE [LARGE SCALE GENOMIC DNA]</scope>
    <source>
        <strain>MSH-3 / Tucson 14011-0111.49</strain>
    </source>
</reference>
<proteinExistence type="inferred from homology"/>
<accession>B4H957</accession>
<sequence>MAFPTTSAQQAETNRKILEDIQTKKQLLAGGIINLGLSNTNQMPSPQLLGQPTVAPEFLPQGVGLPTNATPPRSAFNPTSSTTLGFFIPQDSYFGNSFIPVLPRLEPLPTTTAPATTTASHIAPK</sequence>
<feature type="chain" id="PRO_0000385324" description="SOSS complex subunit C homolog">
    <location>
        <begin position="1"/>
        <end position="125"/>
    </location>
</feature>
<feature type="region of interest" description="Disordered" evidence="1">
    <location>
        <begin position="43"/>
        <end position="77"/>
    </location>
</feature>
<feature type="compositionally biased region" description="Polar residues" evidence="1">
    <location>
        <begin position="67"/>
        <end position="77"/>
    </location>
</feature>
<comment type="similarity">
    <text evidence="2">Belongs to the SOSS-C family.</text>
</comment>
<keyword id="KW-1185">Reference proteome</keyword>